<proteinExistence type="evidence at protein level"/>
<protein>
    <recommendedName>
        <fullName evidence="5">Disintegrin molossin</fullName>
    </recommendedName>
    <alternativeName>
        <fullName>Platelet aggregation activation inhibitor</fullName>
    </alternativeName>
</protein>
<sequence>EAGIECDCGSPENPCCDAATCKLRPGAQCADGLCCDQCRFIKKGKICRRARGDNPDDRCTGQSADCPRNRFHA</sequence>
<feature type="chain" id="PRO_0000101794" description="Disintegrin molossin" evidence="4">
    <location>
        <begin position="1"/>
        <end position="73"/>
    </location>
</feature>
<feature type="domain" description="Disintegrin" evidence="3">
    <location>
        <begin position="1"/>
        <end position="73"/>
    </location>
</feature>
<feature type="short sequence motif" description="Cell attachment site">
    <location>
        <begin position="51"/>
        <end position="53"/>
    </location>
</feature>
<feature type="disulfide bond" evidence="2">
    <location>
        <begin position="6"/>
        <end position="21"/>
    </location>
</feature>
<feature type="disulfide bond" evidence="2">
    <location>
        <begin position="8"/>
        <end position="16"/>
    </location>
</feature>
<feature type="disulfide bond" evidence="2">
    <location>
        <begin position="15"/>
        <end position="38"/>
    </location>
</feature>
<feature type="disulfide bond" evidence="2">
    <location>
        <begin position="29"/>
        <end position="35"/>
    </location>
</feature>
<feature type="disulfide bond" evidence="2">
    <location>
        <begin position="34"/>
        <end position="59"/>
    </location>
</feature>
<feature type="disulfide bond" evidence="2 3">
    <location>
        <begin position="47"/>
        <end position="66"/>
    </location>
</feature>
<keyword id="KW-1217">Cell adhesion impairing toxin</keyword>
<keyword id="KW-0903">Direct protein sequencing</keyword>
<keyword id="KW-1015">Disulfide bond</keyword>
<keyword id="KW-1199">Hemostasis impairing toxin</keyword>
<keyword id="KW-1201">Platelet aggregation inhibiting toxin</keyword>
<keyword id="KW-0964">Secreted</keyword>
<keyword id="KW-0800">Toxin</keyword>
<accession>P31984</accession>
<evidence type="ECO:0000250" key="1"/>
<evidence type="ECO:0000250" key="2">
    <source>
        <dbReference type="UniProtKB" id="Q0NZX5"/>
    </source>
</evidence>
<evidence type="ECO:0000255" key="3">
    <source>
        <dbReference type="PROSITE-ProRule" id="PRU00068"/>
    </source>
</evidence>
<evidence type="ECO:0000269" key="4">
    <source>
    </source>
</evidence>
<evidence type="ECO:0000303" key="5">
    <source>
    </source>
</evidence>
<evidence type="ECO:0000305" key="6"/>
<evidence type="ECO:0000305" key="7">
    <source>
    </source>
</evidence>
<comment type="function">
    <text>Inhibits fibrinogen interaction with platelets. Acts by binding to alpha-IIb/beta-3 (ITGA2B/ITGB3) on the platelet surface and inhibits aggregation induced by ADP, thrombin, platelet-activating factor and collagen.</text>
</comment>
<comment type="subunit">
    <text evidence="1">Monomer (disintegrin).</text>
</comment>
<comment type="subcellular location">
    <subcellularLocation>
        <location evidence="4">Secreted</location>
    </subcellularLocation>
</comment>
<comment type="tissue specificity">
    <text evidence="7">Expressed by the venom gland.</text>
</comment>
<comment type="miscellaneous">
    <text>The disintegrin belongs to the medium disintegrin subfamily.</text>
</comment>
<comment type="similarity">
    <text evidence="6">Belongs to the venom metalloproteinase (M12B) family. P-II subfamily. P-IIa sub-subfamily.</text>
</comment>
<dbReference type="PIR" id="H43019">
    <property type="entry name" value="H43019"/>
</dbReference>
<dbReference type="SMR" id="P31984"/>
<dbReference type="GO" id="GO:0005576">
    <property type="term" value="C:extracellular region"/>
    <property type="evidence" value="ECO:0007669"/>
    <property type="project" value="UniProtKB-SubCell"/>
</dbReference>
<dbReference type="GO" id="GO:0005886">
    <property type="term" value="C:plasma membrane"/>
    <property type="evidence" value="ECO:0007669"/>
    <property type="project" value="TreeGrafter"/>
</dbReference>
<dbReference type="GO" id="GO:0090729">
    <property type="term" value="F:toxin activity"/>
    <property type="evidence" value="ECO:0007669"/>
    <property type="project" value="UniProtKB-KW"/>
</dbReference>
<dbReference type="FunFam" id="4.10.70.10:FF:000005">
    <property type="entry name" value="Zinc metalloproteinase/disintegrin"/>
    <property type="match status" value="1"/>
</dbReference>
<dbReference type="Gene3D" id="4.10.70.10">
    <property type="entry name" value="Disintegrin domain"/>
    <property type="match status" value="1"/>
</dbReference>
<dbReference type="InterPro" id="IPR018358">
    <property type="entry name" value="Disintegrin_CS"/>
</dbReference>
<dbReference type="InterPro" id="IPR001762">
    <property type="entry name" value="Disintegrin_dom"/>
</dbReference>
<dbReference type="InterPro" id="IPR036436">
    <property type="entry name" value="Disintegrin_dom_sf"/>
</dbReference>
<dbReference type="PANTHER" id="PTHR11905">
    <property type="entry name" value="ADAM A DISINTEGRIN AND METALLOPROTEASE DOMAIN"/>
    <property type="match status" value="1"/>
</dbReference>
<dbReference type="PANTHER" id="PTHR11905:SF32">
    <property type="entry name" value="DISINTEGRIN AND METALLOPROTEINASE DOMAIN-CONTAINING PROTEIN 28"/>
    <property type="match status" value="1"/>
</dbReference>
<dbReference type="Pfam" id="PF00200">
    <property type="entry name" value="Disintegrin"/>
    <property type="match status" value="1"/>
</dbReference>
<dbReference type="PRINTS" id="PR00289">
    <property type="entry name" value="DISINTEGRIN"/>
</dbReference>
<dbReference type="SMART" id="SM00050">
    <property type="entry name" value="DISIN"/>
    <property type="match status" value="1"/>
</dbReference>
<dbReference type="SUPFAM" id="SSF57552">
    <property type="entry name" value="Blood coagulation inhibitor (disintegrin)"/>
    <property type="match status" value="1"/>
</dbReference>
<dbReference type="PROSITE" id="PS00427">
    <property type="entry name" value="DISINTEGRIN_1"/>
    <property type="match status" value="1"/>
</dbReference>
<dbReference type="PROSITE" id="PS50214">
    <property type="entry name" value="DISINTEGRIN_2"/>
    <property type="match status" value="1"/>
</dbReference>
<name>VM2I_CROMM</name>
<reference key="1">
    <citation type="journal article" date="1993" name="J. Biol. Chem.">
        <title>Characterization of the integrin specificities of disintegrins isolated from American pit viper venoms.</title>
        <authorList>
            <person name="Scarborough R.M."/>
            <person name="Rose J.W."/>
            <person name="Naughton M.A."/>
            <person name="Phillips D.R."/>
            <person name="Nannizzi L."/>
            <person name="Arfsten A."/>
            <person name="Campbell A.M."/>
            <person name="Charo I.F."/>
        </authorList>
    </citation>
    <scope>PROTEIN SEQUENCE</scope>
    <scope>SUBCELLULAR LOCATION</scope>
    <source>
        <tissue>Venom</tissue>
    </source>
</reference>
<organism>
    <name type="scientific">Crotalus molossus molossus</name>
    <name type="common">Northern black-tailed rattlesnake</name>
    <dbReference type="NCBI Taxonomy" id="31151"/>
    <lineage>
        <taxon>Eukaryota</taxon>
        <taxon>Metazoa</taxon>
        <taxon>Chordata</taxon>
        <taxon>Craniata</taxon>
        <taxon>Vertebrata</taxon>
        <taxon>Euteleostomi</taxon>
        <taxon>Lepidosauria</taxon>
        <taxon>Squamata</taxon>
        <taxon>Bifurcata</taxon>
        <taxon>Unidentata</taxon>
        <taxon>Episquamata</taxon>
        <taxon>Toxicofera</taxon>
        <taxon>Serpentes</taxon>
        <taxon>Colubroidea</taxon>
        <taxon>Viperidae</taxon>
        <taxon>Crotalinae</taxon>
        <taxon>Crotalus</taxon>
    </lineage>
</organism>